<proteinExistence type="inferred from homology"/>
<accession>P0C098</accession>
<dbReference type="EMBL" id="AE009949">
    <property type="status" value="NOT_ANNOTATED_CDS"/>
    <property type="molecule type" value="Genomic_DNA"/>
</dbReference>
<dbReference type="RefSeq" id="WP_002984819.1">
    <property type="nucleotide sequence ID" value="NC_003485.1"/>
</dbReference>
<dbReference type="SMR" id="P0C098"/>
<dbReference type="GeneID" id="69900915"/>
<dbReference type="GO" id="GO:0022625">
    <property type="term" value="C:cytosolic large ribosomal subunit"/>
    <property type="evidence" value="ECO:0007669"/>
    <property type="project" value="TreeGrafter"/>
</dbReference>
<dbReference type="GO" id="GO:0003729">
    <property type="term" value="F:mRNA binding"/>
    <property type="evidence" value="ECO:0007669"/>
    <property type="project" value="TreeGrafter"/>
</dbReference>
<dbReference type="GO" id="GO:0003735">
    <property type="term" value="F:structural constituent of ribosome"/>
    <property type="evidence" value="ECO:0007669"/>
    <property type="project" value="InterPro"/>
</dbReference>
<dbReference type="GO" id="GO:0006412">
    <property type="term" value="P:translation"/>
    <property type="evidence" value="ECO:0007669"/>
    <property type="project" value="UniProtKB-UniRule"/>
</dbReference>
<dbReference type="CDD" id="cd00387">
    <property type="entry name" value="Ribosomal_L7_L12"/>
    <property type="match status" value="1"/>
</dbReference>
<dbReference type="FunFam" id="3.30.1390.10:FF:000001">
    <property type="entry name" value="50S ribosomal protein L7/L12"/>
    <property type="match status" value="1"/>
</dbReference>
<dbReference type="Gene3D" id="3.30.1390.10">
    <property type="match status" value="1"/>
</dbReference>
<dbReference type="Gene3D" id="1.20.5.710">
    <property type="entry name" value="Single helix bin"/>
    <property type="match status" value="1"/>
</dbReference>
<dbReference type="HAMAP" id="MF_00368">
    <property type="entry name" value="Ribosomal_bL12"/>
    <property type="match status" value="1"/>
</dbReference>
<dbReference type="InterPro" id="IPR000206">
    <property type="entry name" value="Ribosomal_bL12"/>
</dbReference>
<dbReference type="InterPro" id="IPR013823">
    <property type="entry name" value="Ribosomal_bL12_C"/>
</dbReference>
<dbReference type="InterPro" id="IPR014719">
    <property type="entry name" value="Ribosomal_bL12_C/ClpS-like"/>
</dbReference>
<dbReference type="InterPro" id="IPR008932">
    <property type="entry name" value="Ribosomal_bL12_oligo"/>
</dbReference>
<dbReference type="InterPro" id="IPR036235">
    <property type="entry name" value="Ribosomal_bL12_oligo_N_sf"/>
</dbReference>
<dbReference type="NCBIfam" id="TIGR00855">
    <property type="entry name" value="L12"/>
    <property type="match status" value="1"/>
</dbReference>
<dbReference type="PANTHER" id="PTHR45987">
    <property type="entry name" value="39S RIBOSOMAL PROTEIN L12"/>
    <property type="match status" value="1"/>
</dbReference>
<dbReference type="PANTHER" id="PTHR45987:SF4">
    <property type="entry name" value="LARGE RIBOSOMAL SUBUNIT PROTEIN BL12M"/>
    <property type="match status" value="1"/>
</dbReference>
<dbReference type="Pfam" id="PF00542">
    <property type="entry name" value="Ribosomal_L12"/>
    <property type="match status" value="1"/>
</dbReference>
<dbReference type="Pfam" id="PF16320">
    <property type="entry name" value="Ribosomal_L12_N"/>
    <property type="match status" value="1"/>
</dbReference>
<dbReference type="SUPFAM" id="SSF54736">
    <property type="entry name" value="ClpS-like"/>
    <property type="match status" value="1"/>
</dbReference>
<dbReference type="SUPFAM" id="SSF48300">
    <property type="entry name" value="Ribosomal protein L7/12, oligomerisation (N-terminal) domain"/>
    <property type="match status" value="1"/>
</dbReference>
<comment type="function">
    <text evidence="1">Forms part of the ribosomal stalk which helps the ribosome interact with GTP-bound translation factors. Is thus essential for accurate translation.</text>
</comment>
<comment type="subunit">
    <text evidence="1">Homodimer. Part of the ribosomal stalk of the 50S ribosomal subunit. Forms a multimeric L10(L12)X complex, where L10 forms an elongated spine to which 2 to 4 L12 dimers bind in a sequential fashion. Binds GTP-bound translation factors.</text>
</comment>
<comment type="similarity">
    <text evidence="1">Belongs to the bacterial ribosomal protein bL12 family.</text>
</comment>
<organism>
    <name type="scientific">Streptococcus pyogenes serotype M18 (strain MGAS8232)</name>
    <dbReference type="NCBI Taxonomy" id="186103"/>
    <lineage>
        <taxon>Bacteria</taxon>
        <taxon>Bacillati</taxon>
        <taxon>Bacillota</taxon>
        <taxon>Bacilli</taxon>
        <taxon>Lactobacillales</taxon>
        <taxon>Streptococcaceae</taxon>
        <taxon>Streptococcus</taxon>
    </lineage>
</organism>
<keyword id="KW-0687">Ribonucleoprotein</keyword>
<keyword id="KW-0689">Ribosomal protein</keyword>
<sequence>MALNIENIIAEIKEASILELNDLVKAIEEEFGVTAAAPVAAAAAGGAEEAAKDSFDVELTSAGDKKVGVIKAVREITGLGLKEAKGLVDGAPANVKEGVAAAEAEEIKAKLEEAGATITLK</sequence>
<evidence type="ECO:0000255" key="1">
    <source>
        <dbReference type="HAMAP-Rule" id="MF_00368"/>
    </source>
</evidence>
<evidence type="ECO:0000305" key="2"/>
<gene>
    <name evidence="1" type="primary">rplL</name>
    <name type="ordered locus">spyM18_1050.1</name>
</gene>
<reference key="1">
    <citation type="journal article" date="2002" name="Proc. Natl. Acad. Sci. U.S.A.">
        <title>Genome sequence and comparative microarray analysis of serotype M18 group A Streptococcus strains associated with acute rheumatic fever outbreaks.</title>
        <authorList>
            <person name="Smoot J.C."/>
            <person name="Barbian K.D."/>
            <person name="Van Gompel J.J."/>
            <person name="Smoot L.M."/>
            <person name="Chaussee M.S."/>
            <person name="Sylva G.L."/>
            <person name="Sturdevant D.E."/>
            <person name="Ricklefs S.M."/>
            <person name="Porcella S.F."/>
            <person name="Parkins L.D."/>
            <person name="Beres S.B."/>
            <person name="Campbell D.S."/>
            <person name="Smith T.M."/>
            <person name="Zhang Q."/>
            <person name="Kapur V."/>
            <person name="Daly J.A."/>
            <person name="Veasy L.G."/>
            <person name="Musser J.M."/>
        </authorList>
    </citation>
    <scope>NUCLEOTIDE SEQUENCE [LARGE SCALE GENOMIC DNA]</scope>
    <source>
        <strain>MGAS8232</strain>
    </source>
</reference>
<name>RL7_STRP8</name>
<protein>
    <recommendedName>
        <fullName evidence="1">Large ribosomal subunit protein bL12</fullName>
    </recommendedName>
    <alternativeName>
        <fullName evidence="2">50S ribosomal protein L7/L12</fullName>
    </alternativeName>
</protein>
<feature type="chain" id="PRO_0000157593" description="Large ribosomal subunit protein bL12">
    <location>
        <begin position="1"/>
        <end position="121"/>
    </location>
</feature>